<reference key="1">
    <citation type="journal article" date="1992" name="Proc. Natl. Acad. Sci. U.S.A.">
        <title>Evolutionary conservation pattern of zinc-finger domains of Drosophila segmentation genes.</title>
        <authorList>
            <person name="Sommer R.J."/>
            <person name="Retzlaff M."/>
            <person name="Goerlich K."/>
            <person name="Sander K."/>
            <person name="Tautz D."/>
        </authorList>
    </citation>
    <scope>NUCLEOTIDE SEQUENCE [GENOMIC DNA]</scope>
</reference>
<keyword id="KW-0217">Developmental protein</keyword>
<keyword id="KW-0238">DNA-binding</keyword>
<keyword id="KW-0302">Gap protein</keyword>
<keyword id="KW-0479">Metal-binding</keyword>
<keyword id="KW-0539">Nucleus</keyword>
<keyword id="KW-0677">Repeat</keyword>
<keyword id="KW-0862">Zinc</keyword>
<keyword id="KW-0863">Zinc-finger</keyword>
<accession>P31505</accession>
<gene>
    <name type="primary">hb</name>
</gene>
<proteinExistence type="inferred from homology"/>
<name>HUNB_BITTE</name>
<dbReference type="EMBL" id="L01590">
    <property type="protein sequence ID" value="AAA27818.1"/>
    <property type="molecule type" value="Genomic_DNA"/>
</dbReference>
<dbReference type="SMR" id="P31505"/>
<dbReference type="GO" id="GO:0005634">
    <property type="term" value="C:nucleus"/>
    <property type="evidence" value="ECO:0007669"/>
    <property type="project" value="UniProtKB-SubCell"/>
</dbReference>
<dbReference type="GO" id="GO:0003677">
    <property type="term" value="F:DNA binding"/>
    <property type="evidence" value="ECO:0007669"/>
    <property type="project" value="UniProtKB-KW"/>
</dbReference>
<dbReference type="GO" id="GO:0008270">
    <property type="term" value="F:zinc ion binding"/>
    <property type="evidence" value="ECO:0007669"/>
    <property type="project" value="UniProtKB-KW"/>
</dbReference>
<dbReference type="GO" id="GO:0010468">
    <property type="term" value="P:regulation of gene expression"/>
    <property type="evidence" value="ECO:0007669"/>
    <property type="project" value="UniProtKB-ARBA"/>
</dbReference>
<dbReference type="GO" id="GO:0035282">
    <property type="term" value="P:segmentation"/>
    <property type="evidence" value="ECO:0007669"/>
    <property type="project" value="UniProtKB-KW"/>
</dbReference>
<dbReference type="FunFam" id="3.30.160.60:FF:001301">
    <property type="entry name" value="Blast:Protein hunchback"/>
    <property type="match status" value="1"/>
</dbReference>
<dbReference type="Gene3D" id="3.30.160.60">
    <property type="entry name" value="Classic Zinc Finger"/>
    <property type="match status" value="1"/>
</dbReference>
<dbReference type="InterPro" id="IPR056438">
    <property type="entry name" value="Znf-C2H2_CTCF"/>
</dbReference>
<dbReference type="InterPro" id="IPR036236">
    <property type="entry name" value="Znf_C2H2_sf"/>
</dbReference>
<dbReference type="InterPro" id="IPR013087">
    <property type="entry name" value="Znf_C2H2_type"/>
</dbReference>
<dbReference type="Pfam" id="PF23611">
    <property type="entry name" value="zf-C2H2_16"/>
    <property type="match status" value="1"/>
</dbReference>
<dbReference type="SMART" id="SM00355">
    <property type="entry name" value="ZnF_C2H2"/>
    <property type="match status" value="1"/>
</dbReference>
<dbReference type="SUPFAM" id="SSF57667">
    <property type="entry name" value="beta-beta-alpha zinc fingers"/>
    <property type="match status" value="1"/>
</dbReference>
<dbReference type="PROSITE" id="PS00028">
    <property type="entry name" value="ZINC_FINGER_C2H2_1"/>
    <property type="match status" value="1"/>
</dbReference>
<dbReference type="PROSITE" id="PS50157">
    <property type="entry name" value="ZINC_FINGER_C2H2_2"/>
    <property type="match status" value="1"/>
</dbReference>
<protein>
    <recommendedName>
        <fullName>Protein hunchback</fullName>
    </recommendedName>
</protein>
<organism>
    <name type="scientific">Bithynia tentaculata</name>
    <name type="common">Spire snail</name>
    <name type="synonym">Helix tentaculata</name>
    <dbReference type="NCBI Taxonomy" id="6478"/>
    <lineage>
        <taxon>Eukaryota</taxon>
        <taxon>Metazoa</taxon>
        <taxon>Spiralia</taxon>
        <taxon>Lophotrochozoa</taxon>
        <taxon>Mollusca</taxon>
        <taxon>Gastropoda</taxon>
        <taxon>Caenogastropoda</taxon>
        <taxon>Littorinimorpha</taxon>
        <taxon>Truncatelloidea</taxon>
        <taxon>Bithyniidae</taxon>
        <taxon>Bithynia</taxon>
    </lineage>
</organism>
<evidence type="ECO:0000255" key="1">
    <source>
        <dbReference type="PROSITE-ProRule" id="PRU00042"/>
    </source>
</evidence>
<evidence type="ECO:0000305" key="2"/>
<comment type="function">
    <text>Gap class segmentation protein that controls development of head structures.</text>
</comment>
<comment type="subcellular location">
    <subcellularLocation>
        <location evidence="2">Nucleus</location>
    </subcellularLocation>
</comment>
<comment type="similarity">
    <text evidence="2">Belongs to the hunchback C2H2-type zinc-finger protein family.</text>
</comment>
<feature type="chain" id="PRO_0000046969" description="Protein hunchback">
    <location>
        <begin position="1" status="less than"/>
        <end position="56" status="greater than"/>
    </location>
</feature>
<feature type="zinc finger region" description="C2H2-type 1" evidence="1">
    <location>
        <begin position="1" status="less than"/>
        <end position="5"/>
    </location>
</feature>
<feature type="zinc finger region" description="C2H2-type 2" evidence="1">
    <location>
        <begin position="11"/>
        <end position="33"/>
    </location>
</feature>
<feature type="zinc finger region" description="C2H2-type 3" evidence="1">
    <location>
        <begin position="39"/>
        <end position="56" status="greater than"/>
    </location>
</feature>
<feature type="non-terminal residue">
    <location>
        <position position="1"/>
    </location>
</feature>
<feature type="non-terminal residue">
    <location>
        <position position="56"/>
    </location>
</feature>
<sequence length="56" mass="6525">HVRNHFGSKPHKCGKCNYSCVNKSMLNSHMKSHTNVYQYRCADCTYATKYCHSLKL</sequence>